<evidence type="ECO:0000255" key="1">
    <source>
        <dbReference type="HAMAP-Rule" id="MF_00394"/>
    </source>
</evidence>
<feature type="chain" id="PRO_0000137970" description="Glycerol-3-phosphate dehydrogenase [NAD(P)+]">
    <location>
        <begin position="1"/>
        <end position="311"/>
    </location>
</feature>
<feature type="active site" description="Proton acceptor" evidence="1">
    <location>
        <position position="178"/>
    </location>
</feature>
<feature type="binding site" evidence="1">
    <location>
        <position position="12"/>
    </location>
    <ligand>
        <name>NADPH</name>
        <dbReference type="ChEBI" id="CHEBI:57783"/>
    </ligand>
</feature>
<feature type="binding site" evidence="1">
    <location>
        <position position="31"/>
    </location>
    <ligand>
        <name>NADPH</name>
        <dbReference type="ChEBI" id="CHEBI:57783"/>
    </ligand>
</feature>
<feature type="binding site" evidence="1">
    <location>
        <position position="32"/>
    </location>
    <ligand>
        <name>NADPH</name>
        <dbReference type="ChEBI" id="CHEBI:57783"/>
    </ligand>
</feature>
<feature type="binding site" evidence="1">
    <location>
        <position position="96"/>
    </location>
    <ligand>
        <name>NADPH</name>
        <dbReference type="ChEBI" id="CHEBI:57783"/>
    </ligand>
</feature>
<feature type="binding site" evidence="1">
    <location>
        <position position="96"/>
    </location>
    <ligand>
        <name>sn-glycerol 3-phosphate</name>
        <dbReference type="ChEBI" id="CHEBI:57597"/>
    </ligand>
</feature>
<feature type="binding site" evidence="1">
    <location>
        <position position="124"/>
    </location>
    <ligand>
        <name>sn-glycerol 3-phosphate</name>
        <dbReference type="ChEBI" id="CHEBI:57597"/>
    </ligand>
</feature>
<feature type="binding site" evidence="1">
    <location>
        <position position="126"/>
    </location>
    <ligand>
        <name>sn-glycerol 3-phosphate</name>
        <dbReference type="ChEBI" id="CHEBI:57597"/>
    </ligand>
</feature>
<feature type="binding site" evidence="1">
    <location>
        <position position="128"/>
    </location>
    <ligand>
        <name>NADPH</name>
        <dbReference type="ChEBI" id="CHEBI:57783"/>
    </ligand>
</feature>
<feature type="binding site" evidence="1">
    <location>
        <position position="178"/>
    </location>
    <ligand>
        <name>sn-glycerol 3-phosphate</name>
        <dbReference type="ChEBI" id="CHEBI:57597"/>
    </ligand>
</feature>
<feature type="binding site" evidence="1">
    <location>
        <position position="231"/>
    </location>
    <ligand>
        <name>sn-glycerol 3-phosphate</name>
        <dbReference type="ChEBI" id="CHEBI:57597"/>
    </ligand>
</feature>
<feature type="binding site" evidence="1">
    <location>
        <position position="241"/>
    </location>
    <ligand>
        <name>sn-glycerol 3-phosphate</name>
        <dbReference type="ChEBI" id="CHEBI:57597"/>
    </ligand>
</feature>
<feature type="binding site" evidence="1">
    <location>
        <position position="242"/>
    </location>
    <ligand>
        <name>NADPH</name>
        <dbReference type="ChEBI" id="CHEBI:57783"/>
    </ligand>
</feature>
<feature type="binding site" evidence="1">
    <location>
        <position position="242"/>
    </location>
    <ligand>
        <name>sn-glycerol 3-phosphate</name>
        <dbReference type="ChEBI" id="CHEBI:57597"/>
    </ligand>
</feature>
<feature type="binding site" evidence="1">
    <location>
        <position position="243"/>
    </location>
    <ligand>
        <name>sn-glycerol 3-phosphate</name>
        <dbReference type="ChEBI" id="CHEBI:57597"/>
    </ligand>
</feature>
<feature type="binding site" evidence="1">
    <location>
        <position position="266"/>
    </location>
    <ligand>
        <name>NADPH</name>
        <dbReference type="ChEBI" id="CHEBI:57783"/>
    </ligand>
</feature>
<feature type="binding site" evidence="1">
    <location>
        <position position="268"/>
    </location>
    <ligand>
        <name>NADPH</name>
        <dbReference type="ChEBI" id="CHEBI:57783"/>
    </ligand>
</feature>
<comment type="function">
    <text evidence="1">Catalyzes the reduction of the glycolytic intermediate dihydroxyacetone phosphate (DHAP) to sn-glycerol 3-phosphate (G3P), the key precursor for phospholipid synthesis.</text>
</comment>
<comment type="catalytic activity">
    <reaction evidence="1">
        <text>sn-glycerol 3-phosphate + NAD(+) = dihydroxyacetone phosphate + NADH + H(+)</text>
        <dbReference type="Rhea" id="RHEA:11092"/>
        <dbReference type="ChEBI" id="CHEBI:15378"/>
        <dbReference type="ChEBI" id="CHEBI:57540"/>
        <dbReference type="ChEBI" id="CHEBI:57597"/>
        <dbReference type="ChEBI" id="CHEBI:57642"/>
        <dbReference type="ChEBI" id="CHEBI:57945"/>
        <dbReference type="EC" id="1.1.1.94"/>
    </reaction>
    <physiologicalReaction direction="right-to-left" evidence="1">
        <dbReference type="Rhea" id="RHEA:11094"/>
    </physiologicalReaction>
</comment>
<comment type="catalytic activity">
    <reaction evidence="1">
        <text>sn-glycerol 3-phosphate + NADP(+) = dihydroxyacetone phosphate + NADPH + H(+)</text>
        <dbReference type="Rhea" id="RHEA:11096"/>
        <dbReference type="ChEBI" id="CHEBI:15378"/>
        <dbReference type="ChEBI" id="CHEBI:57597"/>
        <dbReference type="ChEBI" id="CHEBI:57642"/>
        <dbReference type="ChEBI" id="CHEBI:57783"/>
        <dbReference type="ChEBI" id="CHEBI:58349"/>
        <dbReference type="EC" id="1.1.1.94"/>
    </reaction>
    <physiologicalReaction direction="right-to-left" evidence="1">
        <dbReference type="Rhea" id="RHEA:11098"/>
    </physiologicalReaction>
</comment>
<comment type="pathway">
    <text evidence="1">Membrane lipid metabolism; glycerophospholipid metabolism.</text>
</comment>
<comment type="subcellular location">
    <subcellularLocation>
        <location evidence="1">Cytoplasm</location>
    </subcellularLocation>
</comment>
<comment type="similarity">
    <text evidence="1">Belongs to the NAD-dependent glycerol-3-phosphate dehydrogenase family.</text>
</comment>
<organism>
    <name type="scientific">Helicobacter hepaticus (strain ATCC 51449 / 3B1)</name>
    <dbReference type="NCBI Taxonomy" id="235279"/>
    <lineage>
        <taxon>Bacteria</taxon>
        <taxon>Pseudomonadati</taxon>
        <taxon>Campylobacterota</taxon>
        <taxon>Epsilonproteobacteria</taxon>
        <taxon>Campylobacterales</taxon>
        <taxon>Helicobacteraceae</taxon>
        <taxon>Helicobacter</taxon>
    </lineage>
</organism>
<sequence>MSKVSVFGGGAWGRALAFALAEKNEVRIISRRDISSLLEPLNQKLKTLNCTSIIQVSHKEALDAQYFVMAIATSALREWLAVADLPQKIKILCASKGIESGSGAFVSDIMEERIAHKSIAYLCGPSFASEVVHSLPCALVIHSRNLELSREFGTLMPHFIKTYASPDVVGGEVAGAYKNVIAIAGGICDGLAFGMNAKASLLARGLVEMSRFGEHFGAKMETFLGLSGAGDLFLTSNSTMSRNYRVGLGLAKGKAINEILKELGEVAEGVITAKAITEIGQRENIYTPIAREINLIINGKNVRESSKALMA</sequence>
<protein>
    <recommendedName>
        <fullName evidence="1">Glycerol-3-phosphate dehydrogenase [NAD(P)+]</fullName>
        <ecNumber evidence="1">1.1.1.94</ecNumber>
    </recommendedName>
    <alternativeName>
        <fullName evidence="1">NAD(P)(+)-dependent glycerol-3-phosphate dehydrogenase</fullName>
    </alternativeName>
    <alternativeName>
        <fullName evidence="1">NAD(P)H-dependent dihydroxyacetone-phosphate reductase</fullName>
    </alternativeName>
</protein>
<gene>
    <name evidence="1" type="primary">gpsA</name>
    <name type="ordered locus">HH_0794</name>
</gene>
<keyword id="KW-0963">Cytoplasm</keyword>
<keyword id="KW-0444">Lipid biosynthesis</keyword>
<keyword id="KW-0443">Lipid metabolism</keyword>
<keyword id="KW-0520">NAD</keyword>
<keyword id="KW-0521">NADP</keyword>
<keyword id="KW-0547">Nucleotide-binding</keyword>
<keyword id="KW-0560">Oxidoreductase</keyword>
<keyword id="KW-0594">Phospholipid biosynthesis</keyword>
<keyword id="KW-1208">Phospholipid metabolism</keyword>
<keyword id="KW-1185">Reference proteome</keyword>
<proteinExistence type="inferred from homology"/>
<name>GPDA_HELHP</name>
<dbReference type="EC" id="1.1.1.94" evidence="1"/>
<dbReference type="EMBL" id="AE017125">
    <property type="protein sequence ID" value="AAP77391.1"/>
    <property type="molecule type" value="Genomic_DNA"/>
</dbReference>
<dbReference type="RefSeq" id="WP_011115636.1">
    <property type="nucleotide sequence ID" value="NC_004917.1"/>
</dbReference>
<dbReference type="SMR" id="Q7VI15"/>
<dbReference type="STRING" id="235279.HH_0794"/>
<dbReference type="KEGG" id="hhe:HH_0794"/>
<dbReference type="eggNOG" id="COG0240">
    <property type="taxonomic scope" value="Bacteria"/>
</dbReference>
<dbReference type="HOGENOM" id="CLU_033449_0_2_7"/>
<dbReference type="OrthoDB" id="9812273at2"/>
<dbReference type="UniPathway" id="UPA00940"/>
<dbReference type="Proteomes" id="UP000002495">
    <property type="component" value="Chromosome"/>
</dbReference>
<dbReference type="GO" id="GO:0005829">
    <property type="term" value="C:cytosol"/>
    <property type="evidence" value="ECO:0007669"/>
    <property type="project" value="TreeGrafter"/>
</dbReference>
<dbReference type="GO" id="GO:0047952">
    <property type="term" value="F:glycerol-3-phosphate dehydrogenase [NAD(P)+] activity"/>
    <property type="evidence" value="ECO:0007669"/>
    <property type="project" value="UniProtKB-UniRule"/>
</dbReference>
<dbReference type="GO" id="GO:0051287">
    <property type="term" value="F:NAD binding"/>
    <property type="evidence" value="ECO:0007669"/>
    <property type="project" value="InterPro"/>
</dbReference>
<dbReference type="GO" id="GO:0005975">
    <property type="term" value="P:carbohydrate metabolic process"/>
    <property type="evidence" value="ECO:0007669"/>
    <property type="project" value="InterPro"/>
</dbReference>
<dbReference type="GO" id="GO:0046167">
    <property type="term" value="P:glycerol-3-phosphate biosynthetic process"/>
    <property type="evidence" value="ECO:0007669"/>
    <property type="project" value="UniProtKB-UniRule"/>
</dbReference>
<dbReference type="GO" id="GO:0046168">
    <property type="term" value="P:glycerol-3-phosphate catabolic process"/>
    <property type="evidence" value="ECO:0007669"/>
    <property type="project" value="InterPro"/>
</dbReference>
<dbReference type="GO" id="GO:0006650">
    <property type="term" value="P:glycerophospholipid metabolic process"/>
    <property type="evidence" value="ECO:0007669"/>
    <property type="project" value="UniProtKB-UniRule"/>
</dbReference>
<dbReference type="GO" id="GO:0008654">
    <property type="term" value="P:phospholipid biosynthetic process"/>
    <property type="evidence" value="ECO:0007669"/>
    <property type="project" value="UniProtKB-KW"/>
</dbReference>
<dbReference type="FunFam" id="1.10.1040.10:FF:000025">
    <property type="entry name" value="Glycerol-3-phosphate dehydrogenase [NAD(P)+]"/>
    <property type="match status" value="1"/>
</dbReference>
<dbReference type="Gene3D" id="1.10.1040.10">
    <property type="entry name" value="N-(1-d-carboxylethyl)-l-norvaline Dehydrogenase, domain 2"/>
    <property type="match status" value="1"/>
</dbReference>
<dbReference type="Gene3D" id="3.40.50.720">
    <property type="entry name" value="NAD(P)-binding Rossmann-like Domain"/>
    <property type="match status" value="1"/>
</dbReference>
<dbReference type="HAMAP" id="MF_00394">
    <property type="entry name" value="NAD_Glyc3P_dehydrog"/>
    <property type="match status" value="1"/>
</dbReference>
<dbReference type="InterPro" id="IPR008927">
    <property type="entry name" value="6-PGluconate_DH-like_C_sf"/>
</dbReference>
<dbReference type="InterPro" id="IPR013328">
    <property type="entry name" value="6PGD_dom2"/>
</dbReference>
<dbReference type="InterPro" id="IPR006168">
    <property type="entry name" value="G3P_DH_NAD-dep"/>
</dbReference>
<dbReference type="InterPro" id="IPR006109">
    <property type="entry name" value="G3P_DH_NAD-dep_C"/>
</dbReference>
<dbReference type="InterPro" id="IPR011128">
    <property type="entry name" value="G3P_DH_NAD-dep_N"/>
</dbReference>
<dbReference type="InterPro" id="IPR036291">
    <property type="entry name" value="NAD(P)-bd_dom_sf"/>
</dbReference>
<dbReference type="NCBIfam" id="NF000940">
    <property type="entry name" value="PRK00094.1-2"/>
    <property type="match status" value="1"/>
</dbReference>
<dbReference type="NCBIfam" id="NF000942">
    <property type="entry name" value="PRK00094.1-4"/>
    <property type="match status" value="1"/>
</dbReference>
<dbReference type="NCBIfam" id="NF000943">
    <property type="entry name" value="PRK00094.2-1"/>
    <property type="match status" value="1"/>
</dbReference>
<dbReference type="PANTHER" id="PTHR11728">
    <property type="entry name" value="GLYCEROL-3-PHOSPHATE DEHYDROGENASE"/>
    <property type="match status" value="1"/>
</dbReference>
<dbReference type="PANTHER" id="PTHR11728:SF1">
    <property type="entry name" value="GLYCEROL-3-PHOSPHATE DEHYDROGENASE [NAD(+)] 2, CHLOROPLASTIC"/>
    <property type="match status" value="1"/>
</dbReference>
<dbReference type="Pfam" id="PF07479">
    <property type="entry name" value="NAD_Gly3P_dh_C"/>
    <property type="match status" value="1"/>
</dbReference>
<dbReference type="Pfam" id="PF01210">
    <property type="entry name" value="NAD_Gly3P_dh_N"/>
    <property type="match status" value="1"/>
</dbReference>
<dbReference type="PIRSF" id="PIRSF000114">
    <property type="entry name" value="Glycerol-3-P_dh"/>
    <property type="match status" value="1"/>
</dbReference>
<dbReference type="PRINTS" id="PR00077">
    <property type="entry name" value="GPDHDRGNASE"/>
</dbReference>
<dbReference type="SUPFAM" id="SSF48179">
    <property type="entry name" value="6-phosphogluconate dehydrogenase C-terminal domain-like"/>
    <property type="match status" value="1"/>
</dbReference>
<dbReference type="SUPFAM" id="SSF51735">
    <property type="entry name" value="NAD(P)-binding Rossmann-fold domains"/>
    <property type="match status" value="1"/>
</dbReference>
<dbReference type="PROSITE" id="PS00957">
    <property type="entry name" value="NAD_G3PDH"/>
    <property type="match status" value="1"/>
</dbReference>
<reference key="1">
    <citation type="journal article" date="2003" name="Proc. Natl. Acad. Sci. U.S.A.">
        <title>The complete genome sequence of the carcinogenic bacterium Helicobacter hepaticus.</title>
        <authorList>
            <person name="Suerbaum S."/>
            <person name="Josenhans C."/>
            <person name="Sterzenbach T."/>
            <person name="Drescher B."/>
            <person name="Brandt P."/>
            <person name="Bell M."/>
            <person name="Droege M."/>
            <person name="Fartmann B."/>
            <person name="Fischer H.-P."/>
            <person name="Ge Z."/>
            <person name="Hoerster A."/>
            <person name="Holland R."/>
            <person name="Klein K."/>
            <person name="Koenig J."/>
            <person name="Macko L."/>
            <person name="Mendz G.L."/>
            <person name="Nyakatura G."/>
            <person name="Schauer D.B."/>
            <person name="Shen Z."/>
            <person name="Weber J."/>
            <person name="Frosch M."/>
            <person name="Fox J.G."/>
        </authorList>
    </citation>
    <scope>NUCLEOTIDE SEQUENCE [LARGE SCALE GENOMIC DNA]</scope>
    <source>
        <strain>ATCC 51449 / 3B1</strain>
    </source>
</reference>
<accession>Q7VI15</accession>